<keyword id="KW-0150">Chloroplast</keyword>
<keyword id="KW-0934">Plastid</keyword>
<keyword id="KW-1185">Reference proteome</keyword>
<keyword id="KW-0687">Ribonucleoprotein</keyword>
<keyword id="KW-0689">Ribosomal protein</keyword>
<keyword id="KW-0694">RNA-binding</keyword>
<keyword id="KW-0699">rRNA-binding</keyword>
<feature type="chain" id="PRO_0000276736" description="Small ribosomal subunit protein uS8c">
    <location>
        <begin position="1"/>
        <end position="132"/>
    </location>
</feature>
<proteinExistence type="inferred from homology"/>
<protein>
    <recommendedName>
        <fullName evidence="2">Small ribosomal subunit protein uS8c</fullName>
    </recommendedName>
    <alternativeName>
        <fullName>30S ribosomal protein S8, chloroplastic</fullName>
    </alternativeName>
</protein>
<name>RR8_PHATC</name>
<geneLocation type="chloroplast"/>
<sequence length="132" mass="14842">MVNDTISDMLTRIRNANMVKHQIVQIPASKMSLAIAEILKQEGFIGDFETYSENEKKYLLISLKYVGKLRKPVICKIERVSKPGLRVYSNSKKLPRILDNLGIAIISTSKGVMTNLKAKELGIGGEVLCYIW</sequence>
<accession>A0T0J2</accession>
<reference key="1">
    <citation type="journal article" date="2007" name="Mol. Genet. Genomics">
        <title>Chloroplast genomes of the diatoms Phaeodactylum tricornutum and Thalassiosira pseudonana: comparison with other plastid genomes of the red lineage.</title>
        <authorList>
            <person name="Oudot-Le Secq M.-P."/>
            <person name="Grimwood J."/>
            <person name="Shapiro H."/>
            <person name="Armbrust E.V."/>
            <person name="Bowler C."/>
            <person name="Green B.R."/>
        </authorList>
    </citation>
    <scope>NUCLEOTIDE SEQUENCE [LARGE SCALE GENOMIC DNA]</scope>
    <source>
        <strain>CCAP 1055/1</strain>
    </source>
</reference>
<comment type="function">
    <text evidence="1">One of the primary rRNA binding proteins, it binds directly to 16S rRNA central domain where it helps coordinate assembly of the platform of the 30S subunit.</text>
</comment>
<comment type="subunit">
    <text evidence="1">Part of the 30S ribosomal subunit.</text>
</comment>
<comment type="subcellular location">
    <subcellularLocation>
        <location>Plastid</location>
        <location>Chloroplast</location>
    </subcellularLocation>
</comment>
<comment type="similarity">
    <text evidence="2">Belongs to the universal ribosomal protein uS8 family.</text>
</comment>
<dbReference type="EMBL" id="EF067920">
    <property type="protein sequence ID" value="ABK20690.1"/>
    <property type="molecule type" value="Genomic_DNA"/>
</dbReference>
<dbReference type="RefSeq" id="YP_874467.1">
    <property type="nucleotide sequence ID" value="NC_008588.1"/>
</dbReference>
<dbReference type="SMR" id="A0T0J2"/>
<dbReference type="STRING" id="556484.A0T0J2"/>
<dbReference type="GeneID" id="4524544"/>
<dbReference type="InParanoid" id="A0T0J2"/>
<dbReference type="Proteomes" id="UP000000759">
    <property type="component" value="Chloroplast"/>
</dbReference>
<dbReference type="GO" id="GO:0009507">
    <property type="term" value="C:chloroplast"/>
    <property type="evidence" value="ECO:0007669"/>
    <property type="project" value="UniProtKB-SubCell"/>
</dbReference>
<dbReference type="GO" id="GO:1990904">
    <property type="term" value="C:ribonucleoprotein complex"/>
    <property type="evidence" value="ECO:0007669"/>
    <property type="project" value="UniProtKB-KW"/>
</dbReference>
<dbReference type="GO" id="GO:0005840">
    <property type="term" value="C:ribosome"/>
    <property type="evidence" value="ECO:0007669"/>
    <property type="project" value="UniProtKB-KW"/>
</dbReference>
<dbReference type="GO" id="GO:0019843">
    <property type="term" value="F:rRNA binding"/>
    <property type="evidence" value="ECO:0007669"/>
    <property type="project" value="UniProtKB-UniRule"/>
</dbReference>
<dbReference type="GO" id="GO:0003735">
    <property type="term" value="F:structural constituent of ribosome"/>
    <property type="evidence" value="ECO:0007669"/>
    <property type="project" value="InterPro"/>
</dbReference>
<dbReference type="GO" id="GO:0006412">
    <property type="term" value="P:translation"/>
    <property type="evidence" value="ECO:0007669"/>
    <property type="project" value="UniProtKB-UniRule"/>
</dbReference>
<dbReference type="FunFam" id="3.30.1370.30:FF:000002">
    <property type="entry name" value="30S ribosomal protein S8"/>
    <property type="match status" value="1"/>
</dbReference>
<dbReference type="FunFam" id="3.30.1490.10:FF:000001">
    <property type="entry name" value="30S ribosomal protein S8"/>
    <property type="match status" value="1"/>
</dbReference>
<dbReference type="Gene3D" id="3.30.1370.30">
    <property type="match status" value="1"/>
</dbReference>
<dbReference type="Gene3D" id="3.30.1490.10">
    <property type="match status" value="1"/>
</dbReference>
<dbReference type="HAMAP" id="MF_01302_B">
    <property type="entry name" value="Ribosomal_uS8_B"/>
    <property type="match status" value="1"/>
</dbReference>
<dbReference type="InterPro" id="IPR000630">
    <property type="entry name" value="Ribosomal_uS8"/>
</dbReference>
<dbReference type="InterPro" id="IPR047863">
    <property type="entry name" value="Ribosomal_uS8_CS"/>
</dbReference>
<dbReference type="InterPro" id="IPR035987">
    <property type="entry name" value="Ribosomal_uS8_sf"/>
</dbReference>
<dbReference type="NCBIfam" id="NF001109">
    <property type="entry name" value="PRK00136.1"/>
    <property type="match status" value="1"/>
</dbReference>
<dbReference type="PANTHER" id="PTHR11758">
    <property type="entry name" value="40S RIBOSOMAL PROTEIN S15A"/>
    <property type="match status" value="1"/>
</dbReference>
<dbReference type="Pfam" id="PF00410">
    <property type="entry name" value="Ribosomal_S8"/>
    <property type="match status" value="1"/>
</dbReference>
<dbReference type="SUPFAM" id="SSF56047">
    <property type="entry name" value="Ribosomal protein S8"/>
    <property type="match status" value="1"/>
</dbReference>
<dbReference type="PROSITE" id="PS00053">
    <property type="entry name" value="RIBOSOMAL_S8"/>
    <property type="match status" value="1"/>
</dbReference>
<gene>
    <name type="primary">rps8</name>
</gene>
<evidence type="ECO:0000250" key="1"/>
<evidence type="ECO:0000305" key="2"/>
<organism>
    <name type="scientific">Phaeodactylum tricornutum (strain CCAP 1055/1)</name>
    <dbReference type="NCBI Taxonomy" id="556484"/>
    <lineage>
        <taxon>Eukaryota</taxon>
        <taxon>Sar</taxon>
        <taxon>Stramenopiles</taxon>
        <taxon>Ochrophyta</taxon>
        <taxon>Bacillariophyta</taxon>
        <taxon>Bacillariophyceae</taxon>
        <taxon>Bacillariophycidae</taxon>
        <taxon>Naviculales</taxon>
        <taxon>Phaeodactylaceae</taxon>
        <taxon>Phaeodactylum</taxon>
    </lineage>
</organism>